<reference key="1">
    <citation type="journal article" date="2009" name="Genome Res.">
        <title>Comparative genomics of protoploid Saccharomycetaceae.</title>
        <authorList>
            <consortium name="The Genolevures Consortium"/>
            <person name="Souciet J.-L."/>
            <person name="Dujon B."/>
            <person name="Gaillardin C."/>
            <person name="Johnston M."/>
            <person name="Baret P.V."/>
            <person name="Cliften P."/>
            <person name="Sherman D.J."/>
            <person name="Weissenbach J."/>
            <person name="Westhof E."/>
            <person name="Wincker P."/>
            <person name="Jubin C."/>
            <person name="Poulain J."/>
            <person name="Barbe V."/>
            <person name="Segurens B."/>
            <person name="Artiguenave F."/>
            <person name="Anthouard V."/>
            <person name="Vacherie B."/>
            <person name="Val M.-E."/>
            <person name="Fulton R.S."/>
            <person name="Minx P."/>
            <person name="Wilson R."/>
            <person name="Durrens P."/>
            <person name="Jean G."/>
            <person name="Marck C."/>
            <person name="Martin T."/>
            <person name="Nikolski M."/>
            <person name="Rolland T."/>
            <person name="Seret M.-L."/>
            <person name="Casaregola S."/>
            <person name="Despons L."/>
            <person name="Fairhead C."/>
            <person name="Fischer G."/>
            <person name="Lafontaine I."/>
            <person name="Leh V."/>
            <person name="Lemaire M."/>
            <person name="de Montigny J."/>
            <person name="Neuveglise C."/>
            <person name="Thierry A."/>
            <person name="Blanc-Lenfle I."/>
            <person name="Bleykasten C."/>
            <person name="Diffels J."/>
            <person name="Fritsch E."/>
            <person name="Frangeul L."/>
            <person name="Goeffon A."/>
            <person name="Jauniaux N."/>
            <person name="Kachouri-Lafond R."/>
            <person name="Payen C."/>
            <person name="Potier S."/>
            <person name="Pribylova L."/>
            <person name="Ozanne C."/>
            <person name="Richard G.-F."/>
            <person name="Sacerdot C."/>
            <person name="Straub M.-L."/>
            <person name="Talla E."/>
        </authorList>
    </citation>
    <scope>NUCLEOTIDE SEQUENCE [LARGE SCALE GENOMIC DNA]</scope>
    <source>
        <strain>ATCC 56472 / CBS 6340 / NRRL Y-8284</strain>
    </source>
</reference>
<feature type="chain" id="PRO_0000410758" description="Topoisomerase I damage affected protein 11">
    <location>
        <begin position="1"/>
        <end position="379"/>
    </location>
</feature>
<feature type="region of interest" description="Disordered" evidence="3">
    <location>
        <begin position="1"/>
        <end position="133"/>
    </location>
</feature>
<feature type="region of interest" description="Disordered" evidence="3">
    <location>
        <begin position="197"/>
        <end position="235"/>
    </location>
</feature>
<feature type="region of interest" description="Disordered" evidence="3">
    <location>
        <begin position="263"/>
        <end position="313"/>
    </location>
</feature>
<feature type="region of interest" description="Disordered" evidence="3">
    <location>
        <begin position="332"/>
        <end position="379"/>
    </location>
</feature>
<feature type="coiled-coil region" evidence="2">
    <location>
        <begin position="125"/>
        <end position="190"/>
    </location>
</feature>
<feature type="compositionally biased region" description="Basic and acidic residues" evidence="3">
    <location>
        <begin position="1"/>
        <end position="16"/>
    </location>
</feature>
<feature type="compositionally biased region" description="Polar residues" evidence="3">
    <location>
        <begin position="39"/>
        <end position="54"/>
    </location>
</feature>
<feature type="compositionally biased region" description="Basic and acidic residues" evidence="3">
    <location>
        <begin position="59"/>
        <end position="69"/>
    </location>
</feature>
<feature type="compositionally biased region" description="Low complexity" evidence="3">
    <location>
        <begin position="114"/>
        <end position="128"/>
    </location>
</feature>
<feature type="compositionally biased region" description="Low complexity" evidence="3">
    <location>
        <begin position="200"/>
        <end position="209"/>
    </location>
</feature>
<feature type="compositionally biased region" description="Polar residues" evidence="3">
    <location>
        <begin position="211"/>
        <end position="225"/>
    </location>
</feature>
<feature type="compositionally biased region" description="Low complexity" evidence="3">
    <location>
        <begin position="283"/>
        <end position="305"/>
    </location>
</feature>
<feature type="compositionally biased region" description="Low complexity" evidence="3">
    <location>
        <begin position="343"/>
        <end position="353"/>
    </location>
</feature>
<feature type="compositionally biased region" description="Polar residues" evidence="3">
    <location>
        <begin position="354"/>
        <end position="365"/>
    </location>
</feature>
<feature type="compositionally biased region" description="Basic and acidic residues" evidence="3">
    <location>
        <begin position="366"/>
        <end position="379"/>
    </location>
</feature>
<accession>C5DDJ3</accession>
<dbReference type="EMBL" id="CU928167">
    <property type="protein sequence ID" value="CAR21854.1"/>
    <property type="molecule type" value="Genomic_DNA"/>
</dbReference>
<dbReference type="RefSeq" id="XP_002552292.1">
    <property type="nucleotide sequence ID" value="XM_002552246.1"/>
</dbReference>
<dbReference type="SMR" id="C5DDJ3"/>
<dbReference type="FunCoup" id="C5DDJ3">
    <property type="interactions" value="17"/>
</dbReference>
<dbReference type="GeneID" id="8291150"/>
<dbReference type="KEGG" id="lth:KLTH0C01452g"/>
<dbReference type="eggNOG" id="ENOG502S2SD">
    <property type="taxonomic scope" value="Eukaryota"/>
</dbReference>
<dbReference type="HOGENOM" id="CLU_046807_0_0_1"/>
<dbReference type="InParanoid" id="C5DDJ3"/>
<dbReference type="OMA" id="ERTLNWD"/>
<dbReference type="OrthoDB" id="4036304at2759"/>
<dbReference type="Proteomes" id="UP000002036">
    <property type="component" value="Chromosome C"/>
</dbReference>
<dbReference type="GO" id="GO:0005737">
    <property type="term" value="C:cytoplasm"/>
    <property type="evidence" value="ECO:0007669"/>
    <property type="project" value="UniProtKB-SubCell"/>
</dbReference>
<dbReference type="InterPro" id="IPR031388">
    <property type="entry name" value="Tda11"/>
</dbReference>
<dbReference type="Pfam" id="PF17084">
    <property type="entry name" value="TDA11"/>
    <property type="match status" value="2"/>
</dbReference>
<protein>
    <recommendedName>
        <fullName>Topoisomerase I damage affected protein 11</fullName>
    </recommendedName>
</protein>
<comment type="subcellular location">
    <subcellularLocation>
        <location evidence="1">Cytoplasm</location>
    </subcellularLocation>
</comment>
<comment type="similarity">
    <text evidence="4">Belongs to the TDA11 family.</text>
</comment>
<proteinExistence type="inferred from homology"/>
<evidence type="ECO:0000250" key="1"/>
<evidence type="ECO:0000255" key="2"/>
<evidence type="ECO:0000256" key="3">
    <source>
        <dbReference type="SAM" id="MobiDB-lite"/>
    </source>
</evidence>
<evidence type="ECO:0000305" key="4"/>
<organism>
    <name type="scientific">Lachancea thermotolerans (strain ATCC 56472 / CBS 6340 / NRRL Y-8284)</name>
    <name type="common">Yeast</name>
    <name type="synonym">Kluyveromyces thermotolerans</name>
    <dbReference type="NCBI Taxonomy" id="559295"/>
    <lineage>
        <taxon>Eukaryota</taxon>
        <taxon>Fungi</taxon>
        <taxon>Dikarya</taxon>
        <taxon>Ascomycota</taxon>
        <taxon>Saccharomycotina</taxon>
        <taxon>Saccharomycetes</taxon>
        <taxon>Saccharomycetales</taxon>
        <taxon>Saccharomycetaceae</taxon>
        <taxon>Lachancea</taxon>
    </lineage>
</organism>
<name>TDA11_LACTC</name>
<sequence>MSKLDGFIEEHDRESNIDSGARLESTKPSPKVGSPAQRVRQNGVKSPILQTQATPAKPSEQEHPLKETPTRATAGGKMTRSNTLKRLSLIQPVISPETTPKEHRQQQATRNRSRSVVSVHSRSSSSASEQLADATKDVNALLQLLANKELELLETKHKIEELKKTLTQEEKALLRQTHELQDLKTQVGKALNSGIDEQIQQQSQSSHHSPNQRSLAVPTSHTPGNESRPAHAKKESVWTKPLSFLNQFDQLIQHELEKKLNWDDVASPEKTPGAESGTLSGRSASPASYNNGNSNNNNNNNSNRGRPNEDVLGNMSSSLWSFVSDVKTGLLGINEEEEEESAEAPAVASSGESNNQLRFVGSKNNSEVELKEYNASKRQ</sequence>
<keyword id="KW-0175">Coiled coil</keyword>
<keyword id="KW-0963">Cytoplasm</keyword>
<keyword id="KW-1185">Reference proteome</keyword>
<gene>
    <name type="primary">TDA11</name>
    <name type="ordered locus">KLTH0C01452g</name>
</gene>